<evidence type="ECO:0000255" key="1">
    <source>
        <dbReference type="HAMAP-Rule" id="MF_00160"/>
    </source>
</evidence>
<gene>
    <name evidence="1" type="primary">serC</name>
    <name type="ordered locus">mma_2674</name>
</gene>
<feature type="chain" id="PRO_1000118180" description="Phosphoserine aminotransferase">
    <location>
        <begin position="1"/>
        <end position="363"/>
    </location>
</feature>
<feature type="binding site" evidence="1">
    <location>
        <position position="42"/>
    </location>
    <ligand>
        <name>L-glutamate</name>
        <dbReference type="ChEBI" id="CHEBI:29985"/>
    </ligand>
</feature>
<feature type="binding site" evidence="1">
    <location>
        <position position="105"/>
    </location>
    <ligand>
        <name>pyridoxal 5'-phosphate</name>
        <dbReference type="ChEBI" id="CHEBI:597326"/>
    </ligand>
</feature>
<feature type="binding site" evidence="1">
    <location>
        <position position="155"/>
    </location>
    <ligand>
        <name>pyridoxal 5'-phosphate</name>
        <dbReference type="ChEBI" id="CHEBI:597326"/>
    </ligand>
</feature>
<feature type="binding site" evidence="1">
    <location>
        <position position="175"/>
    </location>
    <ligand>
        <name>pyridoxal 5'-phosphate</name>
        <dbReference type="ChEBI" id="CHEBI:597326"/>
    </ligand>
</feature>
<feature type="binding site" evidence="1">
    <location>
        <position position="198"/>
    </location>
    <ligand>
        <name>pyridoxal 5'-phosphate</name>
        <dbReference type="ChEBI" id="CHEBI:597326"/>
    </ligand>
</feature>
<feature type="binding site" evidence="1">
    <location>
        <begin position="240"/>
        <end position="241"/>
    </location>
    <ligand>
        <name>pyridoxal 5'-phosphate</name>
        <dbReference type="ChEBI" id="CHEBI:597326"/>
    </ligand>
</feature>
<feature type="modified residue" description="N6-(pyridoxal phosphate)lysine" evidence="1">
    <location>
        <position position="199"/>
    </location>
</feature>
<name>SERC_JANMA</name>
<dbReference type="EC" id="2.6.1.52" evidence="1"/>
<dbReference type="EMBL" id="CP000269">
    <property type="protein sequence ID" value="ABR89236.1"/>
    <property type="molecule type" value="Genomic_DNA"/>
</dbReference>
<dbReference type="RefSeq" id="WP_012080525.1">
    <property type="nucleotide sequence ID" value="NC_009659.1"/>
</dbReference>
<dbReference type="SMR" id="A6T1G7"/>
<dbReference type="STRING" id="375286.mma_2674"/>
<dbReference type="KEGG" id="mms:mma_2674"/>
<dbReference type="eggNOG" id="COG1932">
    <property type="taxonomic scope" value="Bacteria"/>
</dbReference>
<dbReference type="HOGENOM" id="CLU_034866_0_2_4"/>
<dbReference type="OrthoDB" id="9809412at2"/>
<dbReference type="UniPathway" id="UPA00135">
    <property type="reaction ID" value="UER00197"/>
</dbReference>
<dbReference type="UniPathway" id="UPA00244">
    <property type="reaction ID" value="UER00311"/>
</dbReference>
<dbReference type="Proteomes" id="UP000006388">
    <property type="component" value="Chromosome"/>
</dbReference>
<dbReference type="GO" id="GO:0005737">
    <property type="term" value="C:cytoplasm"/>
    <property type="evidence" value="ECO:0007669"/>
    <property type="project" value="UniProtKB-SubCell"/>
</dbReference>
<dbReference type="GO" id="GO:0004648">
    <property type="term" value="F:O-phospho-L-serine:2-oxoglutarate aminotransferase activity"/>
    <property type="evidence" value="ECO:0007669"/>
    <property type="project" value="UniProtKB-UniRule"/>
</dbReference>
<dbReference type="GO" id="GO:0030170">
    <property type="term" value="F:pyridoxal phosphate binding"/>
    <property type="evidence" value="ECO:0007669"/>
    <property type="project" value="UniProtKB-UniRule"/>
</dbReference>
<dbReference type="GO" id="GO:0006564">
    <property type="term" value="P:L-serine biosynthetic process"/>
    <property type="evidence" value="ECO:0007669"/>
    <property type="project" value="UniProtKB-UniRule"/>
</dbReference>
<dbReference type="GO" id="GO:0008615">
    <property type="term" value="P:pyridoxine biosynthetic process"/>
    <property type="evidence" value="ECO:0007669"/>
    <property type="project" value="UniProtKB-UniRule"/>
</dbReference>
<dbReference type="CDD" id="cd00611">
    <property type="entry name" value="PSAT_like"/>
    <property type="match status" value="1"/>
</dbReference>
<dbReference type="FunFam" id="3.40.640.10:FF:000010">
    <property type="entry name" value="Phosphoserine aminotransferase"/>
    <property type="match status" value="1"/>
</dbReference>
<dbReference type="FunFam" id="3.90.1150.10:FF:000006">
    <property type="entry name" value="Phosphoserine aminotransferase"/>
    <property type="match status" value="1"/>
</dbReference>
<dbReference type="Gene3D" id="3.90.1150.10">
    <property type="entry name" value="Aspartate Aminotransferase, domain 1"/>
    <property type="match status" value="1"/>
</dbReference>
<dbReference type="Gene3D" id="3.40.640.10">
    <property type="entry name" value="Type I PLP-dependent aspartate aminotransferase-like (Major domain)"/>
    <property type="match status" value="1"/>
</dbReference>
<dbReference type="HAMAP" id="MF_00160">
    <property type="entry name" value="SerC_aminotrans_5"/>
    <property type="match status" value="1"/>
</dbReference>
<dbReference type="InterPro" id="IPR000192">
    <property type="entry name" value="Aminotrans_V_dom"/>
</dbReference>
<dbReference type="InterPro" id="IPR022278">
    <property type="entry name" value="Pser_aminoTfrase"/>
</dbReference>
<dbReference type="InterPro" id="IPR015424">
    <property type="entry name" value="PyrdxlP-dep_Trfase"/>
</dbReference>
<dbReference type="InterPro" id="IPR015421">
    <property type="entry name" value="PyrdxlP-dep_Trfase_major"/>
</dbReference>
<dbReference type="InterPro" id="IPR015422">
    <property type="entry name" value="PyrdxlP-dep_Trfase_small"/>
</dbReference>
<dbReference type="NCBIfam" id="NF003764">
    <property type="entry name" value="PRK05355.1"/>
    <property type="match status" value="1"/>
</dbReference>
<dbReference type="NCBIfam" id="TIGR01364">
    <property type="entry name" value="serC_1"/>
    <property type="match status" value="1"/>
</dbReference>
<dbReference type="PANTHER" id="PTHR43247">
    <property type="entry name" value="PHOSPHOSERINE AMINOTRANSFERASE"/>
    <property type="match status" value="1"/>
</dbReference>
<dbReference type="PANTHER" id="PTHR43247:SF1">
    <property type="entry name" value="PHOSPHOSERINE AMINOTRANSFERASE"/>
    <property type="match status" value="1"/>
</dbReference>
<dbReference type="Pfam" id="PF00266">
    <property type="entry name" value="Aminotran_5"/>
    <property type="match status" value="1"/>
</dbReference>
<dbReference type="PIRSF" id="PIRSF000525">
    <property type="entry name" value="SerC"/>
    <property type="match status" value="1"/>
</dbReference>
<dbReference type="SUPFAM" id="SSF53383">
    <property type="entry name" value="PLP-dependent transferases"/>
    <property type="match status" value="1"/>
</dbReference>
<proteinExistence type="inferred from homology"/>
<sequence length="363" mass="39908">MKRVYNFSPGPAALPQEVIKQAAEEMTNWRGSGLSVMEMSHRGREFTEILATTKADLRSLLSIPDNYKILLMQGGAIAENAIVPMNLVGSKAQPATIDFVNTGHWSSKTIEEAHKYAKVNIAASSEDKDFTYVPARDTWKLTPDAAYVHICTNETIGGVEFDFTPDVGNVPLVADMSSNILSREIDISKYAVIYAGAQKNIGPAGVTIVIVRDDMLGHALPICPSAFDWKLVDEHDSMFNTPPTYPIYIAGLTFQWMLRQGGVAAMEQVNIAKAKLIYDYLDSTDFYVNSVPAANRSRMNVPFFLKDESLNGKFITEADAQGLVQLKGHSSVGGMRASIYNAMPIEGVQALVAFMKDFEKKYG</sequence>
<protein>
    <recommendedName>
        <fullName evidence="1">Phosphoserine aminotransferase</fullName>
        <ecNumber evidence="1">2.6.1.52</ecNumber>
    </recommendedName>
    <alternativeName>
        <fullName evidence="1">Phosphohydroxythreonine aminotransferase</fullName>
        <shortName evidence="1">PSAT</shortName>
    </alternativeName>
</protein>
<reference key="1">
    <citation type="journal article" date="2007" name="PLoS Genet.">
        <title>Genome analysis of Minibacterium massiliensis highlights the convergent evolution of water-living bacteria.</title>
        <authorList>
            <person name="Audic S."/>
            <person name="Robert C."/>
            <person name="Campagna B."/>
            <person name="Parinello H."/>
            <person name="Claverie J.-M."/>
            <person name="Raoult D."/>
            <person name="Drancourt M."/>
        </authorList>
    </citation>
    <scope>NUCLEOTIDE SEQUENCE [LARGE SCALE GENOMIC DNA]</scope>
    <source>
        <strain>Marseille</strain>
    </source>
</reference>
<comment type="function">
    <text evidence="1">Catalyzes the reversible conversion of 3-phosphohydroxypyruvate to phosphoserine and of 3-hydroxy-2-oxo-4-phosphonooxybutanoate to phosphohydroxythreonine.</text>
</comment>
<comment type="catalytic activity">
    <reaction evidence="1">
        <text>O-phospho-L-serine + 2-oxoglutarate = 3-phosphooxypyruvate + L-glutamate</text>
        <dbReference type="Rhea" id="RHEA:14329"/>
        <dbReference type="ChEBI" id="CHEBI:16810"/>
        <dbReference type="ChEBI" id="CHEBI:18110"/>
        <dbReference type="ChEBI" id="CHEBI:29985"/>
        <dbReference type="ChEBI" id="CHEBI:57524"/>
        <dbReference type="EC" id="2.6.1.52"/>
    </reaction>
</comment>
<comment type="catalytic activity">
    <reaction evidence="1">
        <text>4-(phosphooxy)-L-threonine + 2-oxoglutarate = (R)-3-hydroxy-2-oxo-4-phosphooxybutanoate + L-glutamate</text>
        <dbReference type="Rhea" id="RHEA:16573"/>
        <dbReference type="ChEBI" id="CHEBI:16810"/>
        <dbReference type="ChEBI" id="CHEBI:29985"/>
        <dbReference type="ChEBI" id="CHEBI:58452"/>
        <dbReference type="ChEBI" id="CHEBI:58538"/>
        <dbReference type="EC" id="2.6.1.52"/>
    </reaction>
</comment>
<comment type="cofactor">
    <cofactor evidence="1">
        <name>pyridoxal 5'-phosphate</name>
        <dbReference type="ChEBI" id="CHEBI:597326"/>
    </cofactor>
    <text evidence="1">Binds 1 pyridoxal phosphate per subunit.</text>
</comment>
<comment type="pathway">
    <text evidence="1">Amino-acid biosynthesis; L-serine biosynthesis; L-serine from 3-phospho-D-glycerate: step 2/3.</text>
</comment>
<comment type="pathway">
    <text evidence="1">Cofactor biosynthesis; pyridoxine 5'-phosphate biosynthesis; pyridoxine 5'-phosphate from D-erythrose 4-phosphate: step 3/5.</text>
</comment>
<comment type="subunit">
    <text evidence="1">Homodimer.</text>
</comment>
<comment type="subcellular location">
    <subcellularLocation>
        <location evidence="1">Cytoplasm</location>
    </subcellularLocation>
</comment>
<comment type="similarity">
    <text evidence="1">Belongs to the class-V pyridoxal-phosphate-dependent aminotransferase family. SerC subfamily.</text>
</comment>
<keyword id="KW-0028">Amino-acid biosynthesis</keyword>
<keyword id="KW-0032">Aminotransferase</keyword>
<keyword id="KW-0963">Cytoplasm</keyword>
<keyword id="KW-0663">Pyridoxal phosphate</keyword>
<keyword id="KW-0664">Pyridoxine biosynthesis</keyword>
<keyword id="KW-0718">Serine biosynthesis</keyword>
<keyword id="KW-0808">Transferase</keyword>
<organism>
    <name type="scientific">Janthinobacterium sp. (strain Marseille)</name>
    <name type="common">Minibacterium massiliensis</name>
    <dbReference type="NCBI Taxonomy" id="375286"/>
    <lineage>
        <taxon>Bacteria</taxon>
        <taxon>Pseudomonadati</taxon>
        <taxon>Pseudomonadota</taxon>
        <taxon>Betaproteobacteria</taxon>
        <taxon>Burkholderiales</taxon>
        <taxon>Oxalobacteraceae</taxon>
        <taxon>Janthinobacterium</taxon>
    </lineage>
</organism>
<accession>A6T1G7</accession>